<name>GPDA_KLEP7</name>
<dbReference type="EC" id="1.1.1.94" evidence="1"/>
<dbReference type="EMBL" id="CP000647">
    <property type="protein sequence ID" value="ABR79337.1"/>
    <property type="molecule type" value="Genomic_DNA"/>
</dbReference>
<dbReference type="RefSeq" id="WP_002922427.1">
    <property type="nucleotide sequence ID" value="NC_009648.1"/>
</dbReference>
<dbReference type="SMR" id="A6TFK3"/>
<dbReference type="STRING" id="272620.KPN_03952"/>
<dbReference type="PaxDb" id="272620-KPN_03952"/>
<dbReference type="EnsemblBacteria" id="ABR79337">
    <property type="protein sequence ID" value="ABR79337"/>
    <property type="gene ID" value="KPN_03952"/>
</dbReference>
<dbReference type="KEGG" id="kpn:KPN_03952"/>
<dbReference type="HOGENOM" id="CLU_033449_0_2_6"/>
<dbReference type="UniPathway" id="UPA00940"/>
<dbReference type="Proteomes" id="UP000000265">
    <property type="component" value="Chromosome"/>
</dbReference>
<dbReference type="GO" id="GO:0005829">
    <property type="term" value="C:cytosol"/>
    <property type="evidence" value="ECO:0007669"/>
    <property type="project" value="TreeGrafter"/>
</dbReference>
<dbReference type="GO" id="GO:0047952">
    <property type="term" value="F:glycerol-3-phosphate dehydrogenase [NAD(P)+] activity"/>
    <property type="evidence" value="ECO:0007669"/>
    <property type="project" value="UniProtKB-UniRule"/>
</dbReference>
<dbReference type="GO" id="GO:0051287">
    <property type="term" value="F:NAD binding"/>
    <property type="evidence" value="ECO:0007669"/>
    <property type="project" value="InterPro"/>
</dbReference>
<dbReference type="GO" id="GO:0005975">
    <property type="term" value="P:carbohydrate metabolic process"/>
    <property type="evidence" value="ECO:0007669"/>
    <property type="project" value="InterPro"/>
</dbReference>
<dbReference type="GO" id="GO:0046167">
    <property type="term" value="P:glycerol-3-phosphate biosynthetic process"/>
    <property type="evidence" value="ECO:0007669"/>
    <property type="project" value="UniProtKB-UniRule"/>
</dbReference>
<dbReference type="GO" id="GO:0046168">
    <property type="term" value="P:glycerol-3-phosphate catabolic process"/>
    <property type="evidence" value="ECO:0007669"/>
    <property type="project" value="InterPro"/>
</dbReference>
<dbReference type="GO" id="GO:0046474">
    <property type="term" value="P:glycerophospholipid biosynthetic process"/>
    <property type="evidence" value="ECO:0007669"/>
    <property type="project" value="TreeGrafter"/>
</dbReference>
<dbReference type="FunFam" id="1.10.1040.10:FF:000001">
    <property type="entry name" value="Glycerol-3-phosphate dehydrogenase [NAD(P)+]"/>
    <property type="match status" value="1"/>
</dbReference>
<dbReference type="FunFam" id="3.40.50.720:FF:000019">
    <property type="entry name" value="Glycerol-3-phosphate dehydrogenase [NAD(P)+]"/>
    <property type="match status" value="1"/>
</dbReference>
<dbReference type="Gene3D" id="1.10.1040.10">
    <property type="entry name" value="N-(1-d-carboxylethyl)-l-norvaline Dehydrogenase, domain 2"/>
    <property type="match status" value="1"/>
</dbReference>
<dbReference type="Gene3D" id="3.40.50.720">
    <property type="entry name" value="NAD(P)-binding Rossmann-like Domain"/>
    <property type="match status" value="1"/>
</dbReference>
<dbReference type="HAMAP" id="MF_00394">
    <property type="entry name" value="NAD_Glyc3P_dehydrog"/>
    <property type="match status" value="1"/>
</dbReference>
<dbReference type="InterPro" id="IPR008927">
    <property type="entry name" value="6-PGluconate_DH-like_C_sf"/>
</dbReference>
<dbReference type="InterPro" id="IPR013328">
    <property type="entry name" value="6PGD_dom2"/>
</dbReference>
<dbReference type="InterPro" id="IPR006168">
    <property type="entry name" value="G3P_DH_NAD-dep"/>
</dbReference>
<dbReference type="InterPro" id="IPR006109">
    <property type="entry name" value="G3P_DH_NAD-dep_C"/>
</dbReference>
<dbReference type="InterPro" id="IPR011128">
    <property type="entry name" value="G3P_DH_NAD-dep_N"/>
</dbReference>
<dbReference type="InterPro" id="IPR036291">
    <property type="entry name" value="NAD(P)-bd_dom_sf"/>
</dbReference>
<dbReference type="NCBIfam" id="NF000939">
    <property type="entry name" value="PRK00094.1-1"/>
    <property type="match status" value="1"/>
</dbReference>
<dbReference type="NCBIfam" id="NF000940">
    <property type="entry name" value="PRK00094.1-2"/>
    <property type="match status" value="1"/>
</dbReference>
<dbReference type="NCBIfam" id="NF000942">
    <property type="entry name" value="PRK00094.1-4"/>
    <property type="match status" value="1"/>
</dbReference>
<dbReference type="PANTHER" id="PTHR11728">
    <property type="entry name" value="GLYCEROL-3-PHOSPHATE DEHYDROGENASE"/>
    <property type="match status" value="1"/>
</dbReference>
<dbReference type="PANTHER" id="PTHR11728:SF1">
    <property type="entry name" value="GLYCEROL-3-PHOSPHATE DEHYDROGENASE [NAD(+)] 2, CHLOROPLASTIC"/>
    <property type="match status" value="1"/>
</dbReference>
<dbReference type="Pfam" id="PF07479">
    <property type="entry name" value="NAD_Gly3P_dh_C"/>
    <property type="match status" value="1"/>
</dbReference>
<dbReference type="Pfam" id="PF01210">
    <property type="entry name" value="NAD_Gly3P_dh_N"/>
    <property type="match status" value="1"/>
</dbReference>
<dbReference type="PIRSF" id="PIRSF000114">
    <property type="entry name" value="Glycerol-3-P_dh"/>
    <property type="match status" value="1"/>
</dbReference>
<dbReference type="PRINTS" id="PR00077">
    <property type="entry name" value="GPDHDRGNASE"/>
</dbReference>
<dbReference type="SUPFAM" id="SSF48179">
    <property type="entry name" value="6-phosphogluconate dehydrogenase C-terminal domain-like"/>
    <property type="match status" value="1"/>
</dbReference>
<dbReference type="SUPFAM" id="SSF51735">
    <property type="entry name" value="NAD(P)-binding Rossmann-fold domains"/>
    <property type="match status" value="1"/>
</dbReference>
<dbReference type="PROSITE" id="PS00957">
    <property type="entry name" value="NAD_G3PDH"/>
    <property type="match status" value="1"/>
</dbReference>
<keyword id="KW-0963">Cytoplasm</keyword>
<keyword id="KW-0444">Lipid biosynthesis</keyword>
<keyword id="KW-0443">Lipid metabolism</keyword>
<keyword id="KW-0520">NAD</keyword>
<keyword id="KW-0521">NADP</keyword>
<keyword id="KW-0547">Nucleotide-binding</keyword>
<keyword id="KW-0560">Oxidoreductase</keyword>
<keyword id="KW-0594">Phospholipid biosynthesis</keyword>
<keyword id="KW-1208">Phospholipid metabolism</keyword>
<evidence type="ECO:0000255" key="1">
    <source>
        <dbReference type="HAMAP-Rule" id="MF_00394"/>
    </source>
</evidence>
<gene>
    <name evidence="1" type="primary">gpsA</name>
    <name type="ordered locus">KPN78578_39130</name>
    <name type="ORF">KPN_03952</name>
</gene>
<protein>
    <recommendedName>
        <fullName evidence="1">Glycerol-3-phosphate dehydrogenase [NAD(P)+]</fullName>
        <ecNumber evidence="1">1.1.1.94</ecNumber>
    </recommendedName>
    <alternativeName>
        <fullName evidence="1">NAD(P)(+)-dependent glycerol-3-phosphate dehydrogenase</fullName>
    </alternativeName>
    <alternativeName>
        <fullName evidence="1">NAD(P)H-dependent dihydroxyacetone-phosphate reductase</fullName>
    </alternativeName>
</protein>
<proteinExistence type="inferred from homology"/>
<reference key="1">
    <citation type="submission" date="2006-09" db="EMBL/GenBank/DDBJ databases">
        <authorList>
            <consortium name="The Klebsiella pneumonia Genome Sequencing Project"/>
            <person name="McClelland M."/>
            <person name="Sanderson E.K."/>
            <person name="Spieth J."/>
            <person name="Clifton W.S."/>
            <person name="Latreille P."/>
            <person name="Sabo A."/>
            <person name="Pepin K."/>
            <person name="Bhonagiri V."/>
            <person name="Porwollik S."/>
            <person name="Ali J."/>
            <person name="Wilson R.K."/>
        </authorList>
    </citation>
    <scope>NUCLEOTIDE SEQUENCE [LARGE SCALE GENOMIC DNA]</scope>
    <source>
        <strain>ATCC 700721 / MGH 78578</strain>
    </source>
</reference>
<feature type="chain" id="PRO_1000049515" description="Glycerol-3-phosphate dehydrogenase [NAD(P)+]">
    <location>
        <begin position="1"/>
        <end position="339"/>
    </location>
</feature>
<feature type="active site" description="Proton acceptor" evidence="1">
    <location>
        <position position="195"/>
    </location>
</feature>
<feature type="binding site" evidence="1">
    <location>
        <position position="15"/>
    </location>
    <ligand>
        <name>NADPH</name>
        <dbReference type="ChEBI" id="CHEBI:57783"/>
    </ligand>
</feature>
<feature type="binding site" evidence="1">
    <location>
        <position position="16"/>
    </location>
    <ligand>
        <name>NADPH</name>
        <dbReference type="ChEBI" id="CHEBI:57783"/>
    </ligand>
</feature>
<feature type="binding site" evidence="1">
    <location>
        <position position="36"/>
    </location>
    <ligand>
        <name>NADPH</name>
        <dbReference type="ChEBI" id="CHEBI:57783"/>
    </ligand>
</feature>
<feature type="binding site" evidence="1">
    <location>
        <position position="110"/>
    </location>
    <ligand>
        <name>NADPH</name>
        <dbReference type="ChEBI" id="CHEBI:57783"/>
    </ligand>
</feature>
<feature type="binding site" evidence="1">
    <location>
        <position position="110"/>
    </location>
    <ligand>
        <name>sn-glycerol 3-phosphate</name>
        <dbReference type="ChEBI" id="CHEBI:57597"/>
    </ligand>
</feature>
<feature type="binding site" evidence="1">
    <location>
        <position position="139"/>
    </location>
    <ligand>
        <name>sn-glycerol 3-phosphate</name>
        <dbReference type="ChEBI" id="CHEBI:57597"/>
    </ligand>
</feature>
<feature type="binding site" evidence="1">
    <location>
        <position position="141"/>
    </location>
    <ligand>
        <name>sn-glycerol 3-phosphate</name>
        <dbReference type="ChEBI" id="CHEBI:57597"/>
    </ligand>
</feature>
<feature type="binding site" evidence="1">
    <location>
        <position position="143"/>
    </location>
    <ligand>
        <name>NADPH</name>
        <dbReference type="ChEBI" id="CHEBI:57783"/>
    </ligand>
</feature>
<feature type="binding site" evidence="1">
    <location>
        <position position="195"/>
    </location>
    <ligand>
        <name>sn-glycerol 3-phosphate</name>
        <dbReference type="ChEBI" id="CHEBI:57597"/>
    </ligand>
</feature>
<feature type="binding site" evidence="1">
    <location>
        <position position="248"/>
    </location>
    <ligand>
        <name>sn-glycerol 3-phosphate</name>
        <dbReference type="ChEBI" id="CHEBI:57597"/>
    </ligand>
</feature>
<feature type="binding site" evidence="1">
    <location>
        <position position="258"/>
    </location>
    <ligand>
        <name>sn-glycerol 3-phosphate</name>
        <dbReference type="ChEBI" id="CHEBI:57597"/>
    </ligand>
</feature>
<feature type="binding site" evidence="1">
    <location>
        <position position="259"/>
    </location>
    <ligand>
        <name>NADPH</name>
        <dbReference type="ChEBI" id="CHEBI:57783"/>
    </ligand>
</feature>
<feature type="binding site" evidence="1">
    <location>
        <position position="259"/>
    </location>
    <ligand>
        <name>sn-glycerol 3-phosphate</name>
        <dbReference type="ChEBI" id="CHEBI:57597"/>
    </ligand>
</feature>
<feature type="binding site" evidence="1">
    <location>
        <position position="260"/>
    </location>
    <ligand>
        <name>sn-glycerol 3-phosphate</name>
        <dbReference type="ChEBI" id="CHEBI:57597"/>
    </ligand>
</feature>
<feature type="binding site" evidence="1">
    <location>
        <position position="283"/>
    </location>
    <ligand>
        <name>NADPH</name>
        <dbReference type="ChEBI" id="CHEBI:57783"/>
    </ligand>
</feature>
<feature type="binding site" evidence="1">
    <location>
        <position position="285"/>
    </location>
    <ligand>
        <name>NADPH</name>
        <dbReference type="ChEBI" id="CHEBI:57783"/>
    </ligand>
</feature>
<accession>A6TFK3</accession>
<comment type="function">
    <text evidence="1">Catalyzes the reduction of the glycolytic intermediate dihydroxyacetone phosphate (DHAP) to sn-glycerol 3-phosphate (G3P), the key precursor for phospholipid synthesis.</text>
</comment>
<comment type="catalytic activity">
    <reaction evidence="1">
        <text>sn-glycerol 3-phosphate + NAD(+) = dihydroxyacetone phosphate + NADH + H(+)</text>
        <dbReference type="Rhea" id="RHEA:11092"/>
        <dbReference type="ChEBI" id="CHEBI:15378"/>
        <dbReference type="ChEBI" id="CHEBI:57540"/>
        <dbReference type="ChEBI" id="CHEBI:57597"/>
        <dbReference type="ChEBI" id="CHEBI:57642"/>
        <dbReference type="ChEBI" id="CHEBI:57945"/>
        <dbReference type="EC" id="1.1.1.94"/>
    </reaction>
    <physiologicalReaction direction="right-to-left" evidence="1">
        <dbReference type="Rhea" id="RHEA:11094"/>
    </physiologicalReaction>
</comment>
<comment type="catalytic activity">
    <reaction evidence="1">
        <text>sn-glycerol 3-phosphate + NADP(+) = dihydroxyacetone phosphate + NADPH + H(+)</text>
        <dbReference type="Rhea" id="RHEA:11096"/>
        <dbReference type="ChEBI" id="CHEBI:15378"/>
        <dbReference type="ChEBI" id="CHEBI:57597"/>
        <dbReference type="ChEBI" id="CHEBI:57642"/>
        <dbReference type="ChEBI" id="CHEBI:57783"/>
        <dbReference type="ChEBI" id="CHEBI:58349"/>
        <dbReference type="EC" id="1.1.1.94"/>
    </reaction>
    <physiologicalReaction direction="right-to-left" evidence="1">
        <dbReference type="Rhea" id="RHEA:11098"/>
    </physiologicalReaction>
</comment>
<comment type="pathway">
    <text evidence="1">Membrane lipid metabolism; glycerophospholipid metabolism.</text>
</comment>
<comment type="subcellular location">
    <subcellularLocation>
        <location evidence="1">Cytoplasm</location>
    </subcellularLocation>
</comment>
<comment type="similarity">
    <text evidence="1">Belongs to the NAD-dependent glycerol-3-phosphate dehydrogenase family.</text>
</comment>
<organism>
    <name type="scientific">Klebsiella pneumoniae subsp. pneumoniae (strain ATCC 700721 / MGH 78578)</name>
    <dbReference type="NCBI Taxonomy" id="272620"/>
    <lineage>
        <taxon>Bacteria</taxon>
        <taxon>Pseudomonadati</taxon>
        <taxon>Pseudomonadota</taxon>
        <taxon>Gammaproteobacteria</taxon>
        <taxon>Enterobacterales</taxon>
        <taxon>Enterobacteriaceae</taxon>
        <taxon>Klebsiella/Raoultella group</taxon>
        <taxon>Klebsiella</taxon>
        <taxon>Klebsiella pneumoniae complex</taxon>
    </lineage>
</organism>
<sequence length="339" mass="36233">MNALNAAMTVIGAGSYGTALAITLARNGHHVVLWGHDPKHIATLQHDRCNAAFLPDVPFPDTLHLESDLATALAASRDILVVVPSHVFGQVLRQIKPLMRSDARLVWATKGLEAETGRLLQDVAREALGDDIPLAVISGPTFAKELAAGLPTAISLAATDPQFAEDLQRLLHCGKSFRVYINPDFIGVQLGGAVKNVIAIGAGMSDGIGFGANARTALITRGLVEMSRLGAALGADPETFMGMAGLGDLVLTCTDNQSRNRRFGMMLGQGMDVQSAQDKIGQVVEGYRNTKEVRVLAQRLGVEMPITEEIYQVLYCGKIAREAALTLLGRARKDERSSN</sequence>